<reference key="1">
    <citation type="journal article" date="1989" name="J. Bacteriol.">
        <title>The Bacillus subtilis flagellin gene (hag) is transcribed by the sigma 28 form of RNA polymerase.</title>
        <authorList>
            <person name="Mirel D.B."/>
            <person name="Chamberlin M.J."/>
        </authorList>
    </citation>
    <scope>NUCLEOTIDE SEQUENCE [GENOMIC DNA]</scope>
</reference>
<reference key="2">
    <citation type="journal article" date="1996" name="Microbiology">
        <title>Sequence of the 305 degrees-307 degrees region of the Bacillus subtilis chromosome.</title>
        <authorList>
            <person name="Soldo B."/>
            <person name="Lazarevic V."/>
            <person name="Mauel C."/>
            <person name="Karamata D."/>
        </authorList>
    </citation>
    <scope>NUCLEOTIDE SEQUENCE [GENOMIC DNA]</scope>
    <source>
        <strain>168</strain>
    </source>
</reference>
<reference key="3">
    <citation type="journal article" date="1997" name="Nature">
        <title>The complete genome sequence of the Gram-positive bacterium Bacillus subtilis.</title>
        <authorList>
            <person name="Kunst F."/>
            <person name="Ogasawara N."/>
            <person name="Moszer I."/>
            <person name="Albertini A.M."/>
            <person name="Alloni G."/>
            <person name="Azevedo V."/>
            <person name="Bertero M.G."/>
            <person name="Bessieres P."/>
            <person name="Bolotin A."/>
            <person name="Borchert S."/>
            <person name="Borriss R."/>
            <person name="Boursier L."/>
            <person name="Brans A."/>
            <person name="Braun M."/>
            <person name="Brignell S.C."/>
            <person name="Bron S."/>
            <person name="Brouillet S."/>
            <person name="Bruschi C.V."/>
            <person name="Caldwell B."/>
            <person name="Capuano V."/>
            <person name="Carter N.M."/>
            <person name="Choi S.-K."/>
            <person name="Codani J.-J."/>
            <person name="Connerton I.F."/>
            <person name="Cummings N.J."/>
            <person name="Daniel R.A."/>
            <person name="Denizot F."/>
            <person name="Devine K.M."/>
            <person name="Duesterhoeft A."/>
            <person name="Ehrlich S.D."/>
            <person name="Emmerson P.T."/>
            <person name="Entian K.-D."/>
            <person name="Errington J."/>
            <person name="Fabret C."/>
            <person name="Ferrari E."/>
            <person name="Foulger D."/>
            <person name="Fritz C."/>
            <person name="Fujita M."/>
            <person name="Fujita Y."/>
            <person name="Fuma S."/>
            <person name="Galizzi A."/>
            <person name="Galleron N."/>
            <person name="Ghim S.-Y."/>
            <person name="Glaser P."/>
            <person name="Goffeau A."/>
            <person name="Golightly E.J."/>
            <person name="Grandi G."/>
            <person name="Guiseppi G."/>
            <person name="Guy B.J."/>
            <person name="Haga K."/>
            <person name="Haiech J."/>
            <person name="Harwood C.R."/>
            <person name="Henaut A."/>
            <person name="Hilbert H."/>
            <person name="Holsappel S."/>
            <person name="Hosono S."/>
            <person name="Hullo M.-F."/>
            <person name="Itaya M."/>
            <person name="Jones L.-M."/>
            <person name="Joris B."/>
            <person name="Karamata D."/>
            <person name="Kasahara Y."/>
            <person name="Klaerr-Blanchard M."/>
            <person name="Klein C."/>
            <person name="Kobayashi Y."/>
            <person name="Koetter P."/>
            <person name="Koningstein G."/>
            <person name="Krogh S."/>
            <person name="Kumano M."/>
            <person name="Kurita K."/>
            <person name="Lapidus A."/>
            <person name="Lardinois S."/>
            <person name="Lauber J."/>
            <person name="Lazarevic V."/>
            <person name="Lee S.-M."/>
            <person name="Levine A."/>
            <person name="Liu H."/>
            <person name="Masuda S."/>
            <person name="Mauel C."/>
            <person name="Medigue C."/>
            <person name="Medina N."/>
            <person name="Mellado R.P."/>
            <person name="Mizuno M."/>
            <person name="Moestl D."/>
            <person name="Nakai S."/>
            <person name="Noback M."/>
            <person name="Noone D."/>
            <person name="O'Reilly M."/>
            <person name="Ogawa K."/>
            <person name="Ogiwara A."/>
            <person name="Oudega B."/>
            <person name="Park S.-H."/>
            <person name="Parro V."/>
            <person name="Pohl T.M."/>
            <person name="Portetelle D."/>
            <person name="Porwollik S."/>
            <person name="Prescott A.M."/>
            <person name="Presecan E."/>
            <person name="Pujic P."/>
            <person name="Purnelle B."/>
            <person name="Rapoport G."/>
            <person name="Rey M."/>
            <person name="Reynolds S."/>
            <person name="Rieger M."/>
            <person name="Rivolta C."/>
            <person name="Rocha E."/>
            <person name="Roche B."/>
            <person name="Rose M."/>
            <person name="Sadaie Y."/>
            <person name="Sato T."/>
            <person name="Scanlan E."/>
            <person name="Schleich S."/>
            <person name="Schroeter R."/>
            <person name="Scoffone F."/>
            <person name="Sekiguchi J."/>
            <person name="Sekowska A."/>
            <person name="Seror S.J."/>
            <person name="Serror P."/>
            <person name="Shin B.-S."/>
            <person name="Soldo B."/>
            <person name="Sorokin A."/>
            <person name="Tacconi E."/>
            <person name="Takagi T."/>
            <person name="Takahashi H."/>
            <person name="Takemaru K."/>
            <person name="Takeuchi M."/>
            <person name="Tamakoshi A."/>
            <person name="Tanaka T."/>
            <person name="Terpstra P."/>
            <person name="Tognoni A."/>
            <person name="Tosato V."/>
            <person name="Uchiyama S."/>
            <person name="Vandenbol M."/>
            <person name="Vannier F."/>
            <person name="Vassarotti A."/>
            <person name="Viari A."/>
            <person name="Wambutt R."/>
            <person name="Wedler E."/>
            <person name="Wedler H."/>
            <person name="Weitzenegger T."/>
            <person name="Winters P."/>
            <person name="Wipat A."/>
            <person name="Yamamoto H."/>
            <person name="Yamane K."/>
            <person name="Yasumoto K."/>
            <person name="Yata K."/>
            <person name="Yoshida K."/>
            <person name="Yoshikawa H.-F."/>
            <person name="Zumstein E."/>
            <person name="Yoshikawa H."/>
            <person name="Danchin A."/>
        </authorList>
    </citation>
    <scope>NUCLEOTIDE SEQUENCE [LARGE SCALE GENOMIC DNA]</scope>
    <source>
        <strain>168</strain>
    </source>
</reference>
<reference key="4">
    <citation type="unpublished observations" date="1993-09">
        <authorList>
            <person name="Robison K."/>
        </authorList>
    </citation>
    <scope>IDENTIFICATION</scope>
</reference>
<reference key="5">
    <citation type="journal article" date="2007" name="Mol. Microbiol.">
        <title>CsrA of Bacillus subtilis regulates translation initiation of the gene encoding the flagellin protein (hag) by blocking ribosome binding.</title>
        <authorList>
            <person name="Yakhnin H."/>
            <person name="Pandit P."/>
            <person name="Petty T.J."/>
            <person name="Baker C.S."/>
            <person name="Romeo T."/>
            <person name="Babitzke P."/>
        </authorList>
    </citation>
    <scope>FUNCTION IN TRANSLATION REPRESSION</scope>
    <scope>SUBUNIT</scope>
    <scope>INDUCTION</scope>
    <scope>DISRUPTION PHENOTYPE</scope>
    <scope>RNA-BINDING</scope>
    <source>
        <strain>168</strain>
        <strain>1A96</strain>
    </source>
</reference>
<reference key="6">
    <citation type="journal article" date="2011" name="Mol. Microbiol.">
        <title>CsrA-FliW interaction governs flagellin homeostasis and a checkpoint on flagellar morphogenesis in Bacillus subtilis.</title>
        <authorList>
            <person name="Mukherjee S."/>
            <person name="Yakhnin H."/>
            <person name="Kysela D."/>
            <person name="Sokoloski J."/>
            <person name="Babitzke P."/>
            <person name="Kearns D.B."/>
        </authorList>
    </citation>
    <scope>FUNCTION IN TRANSLATION REPRESSION</scope>
    <scope>INTERACTION WITH FLIW</scope>
    <scope>DISRUPTION PHENOTYPE</scope>
    <scope>MUTAGENESIS OF ARG-6; LYS-7; VAL-25; LEU-32; GLY-33; ALA-36 AND GLU-46</scope>
    <scope>RNA-BINDING</scope>
    <source>
        <strain>3610</strain>
    </source>
</reference>
<reference key="7">
    <citation type="journal article" date="2013" name="J. Bacteriol.">
        <title>FliW and FliS function independently to control cytoplasmic flagellin levels in Bacillus subtilis.</title>
        <authorList>
            <person name="Mukherjee S."/>
            <person name="Babitzke P."/>
            <person name="Kearns D.B."/>
        </authorList>
    </citation>
    <scope>DISRUPTION PHENOTYPE</scope>
    <source>
        <strain>3610</strain>
    </source>
</reference>
<reference key="8">
    <citation type="journal article" date="2016" name="Proc. Natl. Acad. Sci. U.S.A.">
        <title>FliW antagonizes CsrA RNA binding by a noncompetitive allosteric mechanism.</title>
        <authorList>
            <person name="Mukherjee S."/>
            <person name="Oshiro R.T."/>
            <person name="Yakhnin H."/>
            <person name="Babitzke P."/>
            <person name="Kearns D.B."/>
        </authorList>
    </citation>
    <scope>FUNCTION</scope>
    <scope>INTERACTION WITH FLIW</scope>
    <scope>DOMAIN</scope>
    <scope>MUTAGENESIS OF ARG-6; LYS-7; ILE-14; GLY-33; ALA-36; GLU-46; LEU-49; ASN-55 AND ALA-58</scope>
    <source>
        <strain>3610</strain>
    </source>
</reference>
<reference key="9">
    <citation type="journal article" date="2015" name="Microbiol. Mol. Biol. Rev.">
        <title>Regulation of bacterial virulence by Csr (Rsm) systems.</title>
        <authorList>
            <person name="Vakulskas C.A."/>
            <person name="Potts A.H."/>
            <person name="Babitzke P."/>
            <person name="Ahmer B.M."/>
            <person name="Romeo T."/>
        </authorList>
    </citation>
    <scope>REVIEW</scope>
</reference>
<reference key="10">
    <citation type="submission" date="2005-10" db="PDB data bank">
        <title>A model for RNA binding by the bacterial carbon storage regulatory protein, csrA.</title>
        <authorList>
            <person name="Koharudin L.M.I."/>
            <person name="Georgiou T."/>
            <person name="Kleanthous C."/>
            <person name="Geoffrey R."/>
            <person name="Kaptein R."/>
            <person name="Boelens R."/>
        </authorList>
    </citation>
    <scope>STRUCTURE BY NMR</scope>
</reference>
<comment type="function">
    <text evidence="3 4 6">A translational regulator that binds mRNA to regulate translation initiation and/or mRNA stability. Usually binds in the 5'-UTR at or near the Shine-Dalgarno sequence preventing ribosome-binding, thus repressing translation. Represses expression of flagellin (hag) in a post-transcriptional fashion. Specifically binds to 2 sites in the 5'-UTR of hag mRNA in a cooperative fashion; the second site overlaps the Shine-Dalgarno sequence and prevents 30S ribosomal subunit binding (PubMed:17555441). Mutation of either binding site abolishes CsrA regulation of hag expression (PubMed:17555441, PubMed:21895793). Repression is greater in the 1A96 than 168 genetic background and higher in minimal than rich medium (PubMed:17555441). Translation repression is antagonized by FliW (PubMed:21895793). Partner switching by flagellin between FliW and CsrA provides a flagellar assembly checkpoint to tightly control the timing of flagellin synthesis. Flagellin binds to assembly factor FliW, freeing CsrA to repress translation of the flagellin mRNA. When the flagellar hook is assembled flagellin is secreted, depleting intracellular flagellin, which frees FliW to interact with CsrA and inhibits CsrA binding to mRNA. This derepresses flagellin translation and provides protein for flagellar assembly. Once the flagellar filament is completed cytoplasmic flagellin levels rise and CsrA translation repression of flagellin reinitiates (PubMed:21895793, PubMed:27516547). Overexpression leads to a dramatic reduction in motility, a significant reduction in flagellin synthesis and reduced flagella assembly (PubMed:21895793).</text>
</comment>
<comment type="subunit">
    <text evidence="1 4 6 8">Homodimer (PubMed:17555441). The beta-strands of each monomer intercalate to form a hydrophobic core while the alpha-helices form wings that extend away from the core (By similarity). Two molecules of FliW interact with 1 homodimer (PubMed:21895793, PubMed:27516547). mRNA and FliW bind to different sites on CsrA (PubMed:27516547).</text>
</comment>
<comment type="subcellular location">
    <subcellularLocation>
        <location evidence="2">Cytoplasm</location>
    </subcellularLocation>
</comment>
<comment type="induction">
    <text evidence="3">Part of the SigD-controlled yvyF-csrA operon and the SigA-controlled fliW-csrA operon (PubMed:17555441). Expressed from the SigA operon at low levels during log phase, with a 5-fold increase as the culture transitions to stationary phase, peaking 1 hour later.</text>
</comment>
<comment type="domain">
    <text evidence="6">Contacts FliW via its C-terminus (residues 49-58).</text>
</comment>
<comment type="disruption phenotype">
    <text evidence="3 4 5">Increased expression of flagellin (hag), 30% decrease in motility halo (PubMed:17555441). Suppresses the motility loss and flagellar assembly defect of an fliW deletion (PubMed:21895793). Suppresses the phenotypes associated with deletion of the intracellular flagella chaperone fliS (PubMed:23144244).</text>
</comment>
<comment type="similarity">
    <text evidence="2">Belongs to the CsrA/RsmA family.</text>
</comment>
<evidence type="ECO:0000250" key="1">
    <source>
        <dbReference type="UniProtKB" id="O69078"/>
    </source>
</evidence>
<evidence type="ECO:0000255" key="2">
    <source>
        <dbReference type="HAMAP-Rule" id="MF_00167"/>
    </source>
</evidence>
<evidence type="ECO:0000269" key="3">
    <source>
    </source>
</evidence>
<evidence type="ECO:0000269" key="4">
    <source>
    </source>
</evidence>
<evidence type="ECO:0000269" key="5">
    <source>
    </source>
</evidence>
<evidence type="ECO:0000269" key="6">
    <source>
    </source>
</evidence>
<evidence type="ECO:0000303" key="7">
    <source>
    </source>
</evidence>
<evidence type="ECO:0000305" key="8">
    <source>
    </source>
</evidence>
<evidence type="ECO:0007829" key="9">
    <source>
        <dbReference type="PDB" id="1T3O"/>
    </source>
</evidence>
<gene>
    <name evidence="2" type="primary">csrA</name>
    <name evidence="7" type="synonym">sow</name>
    <name type="synonym">yviG</name>
    <name type="ordered locus">BSU35370</name>
</gene>
<protein>
    <recommendedName>
        <fullName evidence="2">Translational regulator CsrA</fullName>
    </recommendedName>
</protein>
<organism>
    <name type="scientific">Bacillus subtilis (strain 168)</name>
    <dbReference type="NCBI Taxonomy" id="224308"/>
    <lineage>
        <taxon>Bacteria</taxon>
        <taxon>Bacillati</taxon>
        <taxon>Bacillota</taxon>
        <taxon>Bacilli</taxon>
        <taxon>Bacillales</taxon>
        <taxon>Bacillaceae</taxon>
        <taxon>Bacillus</taxon>
    </lineage>
</organism>
<name>CSRA_BACSU</name>
<dbReference type="EMBL" id="M26948">
    <property type="status" value="NOT_ANNOTATED_CDS"/>
    <property type="molecule type" value="Genomic_DNA"/>
</dbReference>
<dbReference type="EMBL" id="U56901">
    <property type="protein sequence ID" value="AAC44950.1"/>
    <property type="molecule type" value="Genomic_DNA"/>
</dbReference>
<dbReference type="EMBL" id="AL009126">
    <property type="protein sequence ID" value="CAB15554.1"/>
    <property type="molecule type" value="Genomic_DNA"/>
</dbReference>
<dbReference type="PIR" id="H69608">
    <property type="entry name" value="H69608"/>
</dbReference>
<dbReference type="RefSeq" id="NP_391417.1">
    <property type="nucleotide sequence ID" value="NC_000964.3"/>
</dbReference>
<dbReference type="RefSeq" id="WP_003219727.1">
    <property type="nucleotide sequence ID" value="NZ_OZ025638.1"/>
</dbReference>
<dbReference type="PDB" id="1T3O">
    <property type="method" value="NMR"/>
    <property type="chains" value="A=1-74"/>
</dbReference>
<dbReference type="PDBsum" id="1T3O"/>
<dbReference type="SMR" id="P33911"/>
<dbReference type="FunCoup" id="P33911">
    <property type="interactions" value="176"/>
</dbReference>
<dbReference type="STRING" id="224308.BSU35370"/>
<dbReference type="PaxDb" id="224308-BSU35370"/>
<dbReference type="EnsemblBacteria" id="CAB15554">
    <property type="protein sequence ID" value="CAB15554"/>
    <property type="gene ID" value="BSU_35370"/>
</dbReference>
<dbReference type="GeneID" id="936731"/>
<dbReference type="KEGG" id="bsu:BSU35370"/>
<dbReference type="PATRIC" id="fig|224308.179.peg.3828"/>
<dbReference type="eggNOG" id="COG1551">
    <property type="taxonomic scope" value="Bacteria"/>
</dbReference>
<dbReference type="InParanoid" id="P33911"/>
<dbReference type="OrthoDB" id="9809061at2"/>
<dbReference type="PhylomeDB" id="P33911"/>
<dbReference type="BioCyc" id="BSUB:BSU35370-MONOMER"/>
<dbReference type="EvolutionaryTrace" id="P33911"/>
<dbReference type="Proteomes" id="UP000001570">
    <property type="component" value="Chromosome"/>
</dbReference>
<dbReference type="GO" id="GO:0005829">
    <property type="term" value="C:cytosol"/>
    <property type="evidence" value="ECO:0000318"/>
    <property type="project" value="GO_Central"/>
</dbReference>
<dbReference type="GO" id="GO:0048027">
    <property type="term" value="F:mRNA 5'-UTR binding"/>
    <property type="evidence" value="ECO:0007669"/>
    <property type="project" value="UniProtKB-UniRule"/>
</dbReference>
<dbReference type="GO" id="GO:0006402">
    <property type="term" value="P:mRNA catabolic process"/>
    <property type="evidence" value="ECO:0007669"/>
    <property type="project" value="InterPro"/>
</dbReference>
<dbReference type="GO" id="GO:0045947">
    <property type="term" value="P:negative regulation of translational initiation"/>
    <property type="evidence" value="ECO:0007669"/>
    <property type="project" value="UniProtKB-UniRule"/>
</dbReference>
<dbReference type="GO" id="GO:1902208">
    <property type="term" value="P:regulation of bacterial-type flagellum assembly"/>
    <property type="evidence" value="ECO:0007669"/>
    <property type="project" value="UniProtKB-UniRule"/>
</dbReference>
<dbReference type="GO" id="GO:0006109">
    <property type="term" value="P:regulation of carbohydrate metabolic process"/>
    <property type="evidence" value="ECO:0007669"/>
    <property type="project" value="InterPro"/>
</dbReference>
<dbReference type="FunFam" id="2.60.40.4380:FF:000002">
    <property type="entry name" value="Translational regulator CsrA"/>
    <property type="match status" value="1"/>
</dbReference>
<dbReference type="Gene3D" id="2.60.40.4380">
    <property type="entry name" value="Translational regulator CsrA"/>
    <property type="match status" value="1"/>
</dbReference>
<dbReference type="HAMAP" id="MF_00167">
    <property type="entry name" value="CsrA"/>
    <property type="match status" value="1"/>
</dbReference>
<dbReference type="InterPro" id="IPR003751">
    <property type="entry name" value="CsrA"/>
</dbReference>
<dbReference type="InterPro" id="IPR036107">
    <property type="entry name" value="CsrA_sf"/>
</dbReference>
<dbReference type="NCBIfam" id="TIGR00202">
    <property type="entry name" value="csrA"/>
    <property type="match status" value="1"/>
</dbReference>
<dbReference type="NCBIfam" id="NF002469">
    <property type="entry name" value="PRK01712.1"/>
    <property type="match status" value="1"/>
</dbReference>
<dbReference type="PANTHER" id="PTHR34984">
    <property type="entry name" value="CARBON STORAGE REGULATOR"/>
    <property type="match status" value="1"/>
</dbReference>
<dbReference type="PANTHER" id="PTHR34984:SF1">
    <property type="entry name" value="CARBON STORAGE REGULATOR"/>
    <property type="match status" value="1"/>
</dbReference>
<dbReference type="Pfam" id="PF02599">
    <property type="entry name" value="CsrA"/>
    <property type="match status" value="1"/>
</dbReference>
<dbReference type="SUPFAM" id="SSF117130">
    <property type="entry name" value="CsrA-like"/>
    <property type="match status" value="1"/>
</dbReference>
<proteinExistence type="evidence at protein level"/>
<keyword id="KW-0002">3D-structure</keyword>
<keyword id="KW-0963">Cytoplasm</keyword>
<keyword id="KW-1185">Reference proteome</keyword>
<keyword id="KW-0678">Repressor</keyword>
<keyword id="KW-0694">RNA-binding</keyword>
<keyword id="KW-0810">Translation regulation</keyword>
<accession>P33911</accession>
<sequence length="74" mass="8136">MLVLSRKINEAIQIGADIEVKVIAVEGDQVKLGIDAPKHIDIHRKEIYLTIQEENNRAAALSSDVISALSSQKK</sequence>
<feature type="chain" id="PRO_0000177049" description="Translational regulator CsrA">
    <location>
        <begin position="1"/>
        <end position="74"/>
    </location>
</feature>
<feature type="mutagenesis site" description="In sow-2 and sow28; suppresses the motility loss and flagellar assembly defect of an fliW deletion. Binds FliW." evidence="4 6">
    <original>R</original>
    <variation>L</variation>
    <variation>W</variation>
    <location>
        <position position="6"/>
    </location>
</feature>
<feature type="mutagenesis site" description="In sow-12; suppresses the motility loss and flagellar assembly defect of an fliW deletion. Binds FliW." evidence="4 6">
    <original>K</original>
    <variation>E</variation>
    <location>
        <position position="7"/>
    </location>
</feature>
<feature type="mutagenesis site" description="Inhibits motility and flagellar filament assembly, still binds FliW. Binds 5'-UTR of hag mRNA, is not completed by FliW." evidence="6">
    <original>I</original>
    <variation>M</variation>
    <location>
        <position position="14"/>
    </location>
</feature>
<feature type="mutagenesis site" description="In sow-20; suppresses the motility loss and flagellar assembly defect of an fliW deletion." evidence="4">
    <original>V</original>
    <variation>G</variation>
    <location>
        <position position="25"/>
    </location>
</feature>
<feature type="mutagenesis site" description="In sow-10; suppresses the motility loss and flagellar assembly defect of an fliW deletion." evidence="4">
    <original>L</original>
    <variation>P</variation>
    <location>
        <position position="32"/>
    </location>
</feature>
<feature type="mutagenesis site" description="In sow-11; suppresses the motility loss and flagellar assembly defect of an fliW deletion. Binds FliW." evidence="4 6">
    <original>G</original>
    <variation>R</variation>
    <location>
        <position position="33"/>
    </location>
</feature>
<feature type="mutagenesis site" description="In sow-8 and sow-4; suppresses the motility loss and flagellar assembly defect of an fliW deletion. Binds FliW." evidence="4 6">
    <original>A</original>
    <variation>T</variation>
    <variation>V</variation>
    <location>
        <position position="36"/>
    </location>
</feature>
<feature type="mutagenesis site" description="In sow-15; suppresses the motility loss and flagellar assembly defect of an fliW deletion. Binds FliW." evidence="4 6">
    <original>E</original>
    <variation>K</variation>
    <location>
        <position position="46"/>
    </location>
</feature>
<feature type="mutagenesis site" description="Inhibits motility and flagellar filament assembly, reduced binding of FliW." evidence="6">
    <original>L</original>
    <variation>S</variation>
    <location>
        <position position="49"/>
    </location>
</feature>
<feature type="mutagenesis site" description="Inhibits motility and flagellar filament assembly, greatly reduced binding of FliW. Binds 5'-UTR of hag mRNA, is not completed by FliW." evidence="6">
    <original>N</original>
    <variation>D</variation>
    <location>
        <position position="55"/>
    </location>
</feature>
<feature type="mutagenesis site" description="Inhibits motility and flagellar filament assembly, reduced binding of FliW." evidence="6">
    <original>A</original>
    <variation>V</variation>
    <location>
        <position position="58"/>
    </location>
</feature>
<feature type="strand" evidence="9">
    <location>
        <begin position="1"/>
        <end position="5"/>
    </location>
</feature>
<feature type="strand" evidence="9">
    <location>
        <begin position="12"/>
        <end position="14"/>
    </location>
</feature>
<feature type="turn" evidence="9">
    <location>
        <begin position="15"/>
        <end position="17"/>
    </location>
</feature>
<feature type="strand" evidence="9">
    <location>
        <begin position="18"/>
        <end position="20"/>
    </location>
</feature>
<feature type="strand" evidence="9">
    <location>
        <begin position="30"/>
        <end position="38"/>
    </location>
</feature>
<feature type="turn" evidence="9">
    <location>
        <begin position="52"/>
        <end position="54"/>
    </location>
</feature>